<comment type="function">
    <text evidence="1">Specifically catalyzes the cleavage of the D-lactyl ether substituent of MurNAc 6-phosphate, producing GlcNAc 6-phosphate and D-lactate. Together with AnmK, is also required for the utilization of anhydro-N-acetylmuramic acid (anhMurNAc) either imported from the medium or derived from its own cell wall murein, and thus plays a role in cell wall recycling.</text>
</comment>
<comment type="catalytic activity">
    <reaction evidence="1">
        <text>N-acetyl-D-muramate 6-phosphate + H2O = N-acetyl-D-glucosamine 6-phosphate + (R)-lactate</text>
        <dbReference type="Rhea" id="RHEA:26410"/>
        <dbReference type="ChEBI" id="CHEBI:15377"/>
        <dbReference type="ChEBI" id="CHEBI:16004"/>
        <dbReference type="ChEBI" id="CHEBI:57513"/>
        <dbReference type="ChEBI" id="CHEBI:58722"/>
        <dbReference type="EC" id="4.2.1.126"/>
    </reaction>
</comment>
<comment type="pathway">
    <text evidence="1">Amino-sugar metabolism; 1,6-anhydro-N-acetylmuramate degradation.</text>
</comment>
<comment type="pathway">
    <text evidence="1">Amino-sugar metabolism; N-acetylmuramate degradation.</text>
</comment>
<comment type="pathway">
    <text evidence="1">Cell wall biogenesis; peptidoglycan recycling.</text>
</comment>
<comment type="subunit">
    <text evidence="1">Homodimer.</text>
</comment>
<comment type="induction">
    <text evidence="1">Induced by MurNAc 6-phosphate that releases the repressor MurR from the DNA. Repressed by MurR in the absence of MurNAc 6-phosphate.</text>
</comment>
<comment type="miscellaneous">
    <text evidence="1">A lyase-type mechanism (elimination/hydration) is suggested for the cleavage of the lactyl ether bond of MurNAc 6-phosphate, with the formation of an alpha,beta-unsaturated aldehyde intermediate with (E)-stereochemistry, followed by the syn addition of water to give product.</text>
</comment>
<comment type="similarity">
    <text evidence="1">Belongs to the GCKR-like family. MurNAc-6-P etherase subfamily.</text>
</comment>
<name>MURQ_ECOLC</name>
<dbReference type="EC" id="4.2.1.126" evidence="1"/>
<dbReference type="EMBL" id="CP000946">
    <property type="protein sequence ID" value="ACA76917.1"/>
    <property type="molecule type" value="Genomic_DNA"/>
</dbReference>
<dbReference type="RefSeq" id="WP_001159160.1">
    <property type="nucleotide sequence ID" value="NZ_MTFT01000002.1"/>
</dbReference>
<dbReference type="SMR" id="B1IX44"/>
<dbReference type="KEGG" id="ecl:EcolC_1251"/>
<dbReference type="HOGENOM" id="CLU_049049_1_1_6"/>
<dbReference type="UniPathway" id="UPA00342"/>
<dbReference type="UniPathway" id="UPA00343"/>
<dbReference type="UniPathway" id="UPA00544"/>
<dbReference type="GO" id="GO:0097367">
    <property type="term" value="F:carbohydrate derivative binding"/>
    <property type="evidence" value="ECO:0007669"/>
    <property type="project" value="InterPro"/>
</dbReference>
<dbReference type="GO" id="GO:0016835">
    <property type="term" value="F:carbon-oxygen lyase activity"/>
    <property type="evidence" value="ECO:0007669"/>
    <property type="project" value="UniProtKB-UniRule"/>
</dbReference>
<dbReference type="GO" id="GO:0016803">
    <property type="term" value="F:ether hydrolase activity"/>
    <property type="evidence" value="ECO:0007669"/>
    <property type="project" value="TreeGrafter"/>
</dbReference>
<dbReference type="GO" id="GO:0097175">
    <property type="term" value="P:1,6-anhydro-N-acetyl-beta-muramic acid catabolic process"/>
    <property type="evidence" value="ECO:0007669"/>
    <property type="project" value="UniProtKB-UniRule"/>
</dbReference>
<dbReference type="GO" id="GO:0046348">
    <property type="term" value="P:amino sugar catabolic process"/>
    <property type="evidence" value="ECO:0007669"/>
    <property type="project" value="InterPro"/>
</dbReference>
<dbReference type="GO" id="GO:0097173">
    <property type="term" value="P:N-acetylmuramic acid catabolic process"/>
    <property type="evidence" value="ECO:0007669"/>
    <property type="project" value="UniProtKB-UniPathway"/>
</dbReference>
<dbReference type="GO" id="GO:0009254">
    <property type="term" value="P:peptidoglycan turnover"/>
    <property type="evidence" value="ECO:0007669"/>
    <property type="project" value="UniProtKB-UniRule"/>
</dbReference>
<dbReference type="CDD" id="cd05007">
    <property type="entry name" value="SIS_Etherase"/>
    <property type="match status" value="1"/>
</dbReference>
<dbReference type="FunFam" id="1.10.8.1080:FF:000001">
    <property type="entry name" value="N-acetylmuramic acid 6-phosphate etherase"/>
    <property type="match status" value="1"/>
</dbReference>
<dbReference type="FunFam" id="3.40.50.10490:FF:000014">
    <property type="entry name" value="N-acetylmuramic acid 6-phosphate etherase"/>
    <property type="match status" value="1"/>
</dbReference>
<dbReference type="Gene3D" id="1.10.8.1080">
    <property type="match status" value="1"/>
</dbReference>
<dbReference type="Gene3D" id="3.40.50.10490">
    <property type="entry name" value="Glucose-6-phosphate isomerase like protein, domain 1"/>
    <property type="match status" value="1"/>
</dbReference>
<dbReference type="HAMAP" id="MF_00068">
    <property type="entry name" value="MurQ"/>
    <property type="match status" value="1"/>
</dbReference>
<dbReference type="InterPro" id="IPR005488">
    <property type="entry name" value="Etherase_MurQ"/>
</dbReference>
<dbReference type="InterPro" id="IPR005486">
    <property type="entry name" value="Glucokinase_regulatory_CS"/>
</dbReference>
<dbReference type="InterPro" id="IPR040190">
    <property type="entry name" value="MURQ/GCKR"/>
</dbReference>
<dbReference type="InterPro" id="IPR001347">
    <property type="entry name" value="SIS_dom"/>
</dbReference>
<dbReference type="InterPro" id="IPR046348">
    <property type="entry name" value="SIS_dom_sf"/>
</dbReference>
<dbReference type="NCBIfam" id="TIGR00274">
    <property type="entry name" value="N-acetylmuramic acid 6-phosphate etherase"/>
    <property type="match status" value="1"/>
</dbReference>
<dbReference type="NCBIfam" id="NF003915">
    <property type="entry name" value="PRK05441.1"/>
    <property type="match status" value="1"/>
</dbReference>
<dbReference type="NCBIfam" id="NF009222">
    <property type="entry name" value="PRK12570.1"/>
    <property type="match status" value="1"/>
</dbReference>
<dbReference type="PANTHER" id="PTHR10088">
    <property type="entry name" value="GLUCOKINASE REGULATORY PROTEIN"/>
    <property type="match status" value="1"/>
</dbReference>
<dbReference type="PANTHER" id="PTHR10088:SF4">
    <property type="entry name" value="GLUCOKINASE REGULATORY PROTEIN"/>
    <property type="match status" value="1"/>
</dbReference>
<dbReference type="Pfam" id="PF20741">
    <property type="entry name" value="GKRP-like_C"/>
    <property type="match status" value="1"/>
</dbReference>
<dbReference type="Pfam" id="PF22645">
    <property type="entry name" value="GKRP_SIS_N"/>
    <property type="match status" value="1"/>
</dbReference>
<dbReference type="SUPFAM" id="SSF53697">
    <property type="entry name" value="SIS domain"/>
    <property type="match status" value="1"/>
</dbReference>
<dbReference type="PROSITE" id="PS01272">
    <property type="entry name" value="GCKR"/>
    <property type="match status" value="1"/>
</dbReference>
<dbReference type="PROSITE" id="PS51464">
    <property type="entry name" value="SIS"/>
    <property type="match status" value="1"/>
</dbReference>
<keyword id="KW-0119">Carbohydrate metabolism</keyword>
<keyword id="KW-0456">Lyase</keyword>
<sequence length="298" mass="31220">MQFEKMITEGSNTASAEIDRVSTLEMCRIINDEDKTVPLAVERVLPDIAAAIDVIHAQVSGGGRLIYLGAGTSGRLGILDASECPPTYGVKPGLVVGLIAGGEYAIQHAVEGAEDSREGGVNDLKNINLTAQDVVVGIAASGRTPYVIAGLEYARQLGCRTVGISCNPGSAVSTTAEFAITPIVGAEVVTGSSRMKAGTAQKLVLNMLSTGLMIKSGKVFGNLMVDVVATNEKLHVRQVNIVKNATGCSAEQAEAALIACERNCKTAIVMVLKNLDAAEAKKRLDQHGGFIRQVLDKE</sequence>
<reference key="1">
    <citation type="submission" date="2008-02" db="EMBL/GenBank/DDBJ databases">
        <title>Complete sequence of Escherichia coli C str. ATCC 8739.</title>
        <authorList>
            <person name="Copeland A."/>
            <person name="Lucas S."/>
            <person name="Lapidus A."/>
            <person name="Glavina del Rio T."/>
            <person name="Dalin E."/>
            <person name="Tice H."/>
            <person name="Bruce D."/>
            <person name="Goodwin L."/>
            <person name="Pitluck S."/>
            <person name="Kiss H."/>
            <person name="Brettin T."/>
            <person name="Detter J.C."/>
            <person name="Han C."/>
            <person name="Kuske C.R."/>
            <person name="Schmutz J."/>
            <person name="Larimer F."/>
            <person name="Land M."/>
            <person name="Hauser L."/>
            <person name="Kyrpides N."/>
            <person name="Mikhailova N."/>
            <person name="Ingram L."/>
            <person name="Richardson P."/>
        </authorList>
    </citation>
    <scope>NUCLEOTIDE SEQUENCE [LARGE SCALE GENOMIC DNA]</scope>
    <source>
        <strain>ATCC 8739 / DSM 1576 / NBRC 3972 / NCIMB 8545 / WDCM 00012 / Crooks</strain>
    </source>
</reference>
<gene>
    <name evidence="1" type="primary">murQ</name>
    <name type="ordered locus">EcolC_1251</name>
</gene>
<proteinExistence type="inferred from homology"/>
<feature type="chain" id="PRO_1000075106" description="N-acetylmuramic acid 6-phosphate etherase">
    <location>
        <begin position="1"/>
        <end position="298"/>
    </location>
</feature>
<feature type="domain" description="SIS" evidence="1">
    <location>
        <begin position="55"/>
        <end position="218"/>
    </location>
</feature>
<feature type="active site" description="Proton donor" evidence="1">
    <location>
        <position position="83"/>
    </location>
</feature>
<feature type="active site" evidence="1">
    <location>
        <position position="114"/>
    </location>
</feature>
<protein>
    <recommendedName>
        <fullName evidence="1">N-acetylmuramic acid 6-phosphate etherase</fullName>
        <shortName evidence="1">MurNAc-6-P etherase</shortName>
        <ecNumber evidence="1">4.2.1.126</ecNumber>
    </recommendedName>
    <alternativeName>
        <fullName evidence="1">N-acetylmuramic acid 6-phosphate hydrolase</fullName>
    </alternativeName>
    <alternativeName>
        <fullName evidence="1">N-acetylmuramic acid 6-phosphate lyase</fullName>
    </alternativeName>
</protein>
<evidence type="ECO:0000255" key="1">
    <source>
        <dbReference type="HAMAP-Rule" id="MF_00068"/>
    </source>
</evidence>
<accession>B1IX44</accession>
<organism>
    <name type="scientific">Escherichia coli (strain ATCC 8739 / DSM 1576 / NBRC 3972 / NCIMB 8545 / WDCM 00012 / Crooks)</name>
    <dbReference type="NCBI Taxonomy" id="481805"/>
    <lineage>
        <taxon>Bacteria</taxon>
        <taxon>Pseudomonadati</taxon>
        <taxon>Pseudomonadota</taxon>
        <taxon>Gammaproteobacteria</taxon>
        <taxon>Enterobacterales</taxon>
        <taxon>Enterobacteriaceae</taxon>
        <taxon>Escherichia</taxon>
    </lineage>
</organism>